<feature type="chain" id="PRO_0000046697" description="Snaclec botrocetin subunit alpha">
    <location>
        <begin position="1"/>
        <end position="133"/>
    </location>
</feature>
<feature type="domain" description="C-type lectin" evidence="1">
    <location>
        <begin position="9"/>
        <end position="129"/>
    </location>
</feature>
<feature type="disulfide bond" evidence="1 5">
    <location>
        <begin position="2"/>
        <end position="13"/>
    </location>
</feature>
<feature type="disulfide bond">
    <location>
        <begin position="30"/>
        <end position="128"/>
    </location>
</feature>
<feature type="disulfide bond" description="Interchain (with C-75 in beta chain)">
    <location>
        <position position="80"/>
    </location>
</feature>
<feature type="disulfide bond">
    <location>
        <begin position="103"/>
        <end position="120"/>
    </location>
</feature>
<feature type="strand" evidence="8">
    <location>
        <begin position="7"/>
        <end position="9"/>
    </location>
</feature>
<feature type="strand" evidence="8">
    <location>
        <begin position="12"/>
        <end position="21"/>
    </location>
</feature>
<feature type="helix" evidence="8">
    <location>
        <begin position="23"/>
        <end position="33"/>
    </location>
</feature>
<feature type="strand" evidence="10">
    <location>
        <begin position="44"/>
        <end position="46"/>
    </location>
</feature>
<feature type="helix" evidence="8">
    <location>
        <begin position="48"/>
        <end position="59"/>
    </location>
</feature>
<feature type="strand" evidence="8">
    <location>
        <begin position="66"/>
        <end position="73"/>
    </location>
</feature>
<feature type="strand" evidence="8">
    <location>
        <begin position="76"/>
        <end position="80"/>
    </location>
</feature>
<feature type="strand" evidence="9">
    <location>
        <begin position="85"/>
        <end position="87"/>
    </location>
</feature>
<feature type="helix" evidence="8">
    <location>
        <begin position="97"/>
        <end position="99"/>
    </location>
</feature>
<feature type="strand" evidence="8">
    <location>
        <begin position="103"/>
        <end position="107"/>
    </location>
</feature>
<feature type="turn" evidence="8">
    <location>
        <begin position="108"/>
        <end position="111"/>
    </location>
</feature>
<feature type="strand" evidence="8">
    <location>
        <begin position="114"/>
        <end position="118"/>
    </location>
</feature>
<feature type="strand" evidence="8">
    <location>
        <begin position="124"/>
        <end position="130"/>
    </location>
</feature>
<organism>
    <name type="scientific">Bothrops jararaca</name>
    <name type="common">Jararaca</name>
    <name type="synonym">Bothrops jajaraca</name>
    <dbReference type="NCBI Taxonomy" id="8724"/>
    <lineage>
        <taxon>Eukaryota</taxon>
        <taxon>Metazoa</taxon>
        <taxon>Chordata</taxon>
        <taxon>Craniata</taxon>
        <taxon>Vertebrata</taxon>
        <taxon>Euteleostomi</taxon>
        <taxon>Lepidosauria</taxon>
        <taxon>Squamata</taxon>
        <taxon>Bifurcata</taxon>
        <taxon>Unidentata</taxon>
        <taxon>Episquamata</taxon>
        <taxon>Toxicofera</taxon>
        <taxon>Serpentes</taxon>
        <taxon>Colubroidea</taxon>
        <taxon>Viperidae</taxon>
        <taxon>Crotalinae</taxon>
        <taxon>Bothrops</taxon>
    </lineage>
</organism>
<name>SLEA_BOTJA</name>
<proteinExistence type="evidence at protein level"/>
<dbReference type="PIR" id="A47267">
    <property type="entry name" value="A47267"/>
</dbReference>
<dbReference type="PDB" id="1FVU">
    <property type="method" value="X-ray"/>
    <property type="resolution" value="1.80 A"/>
    <property type="chains" value="A/C=1-133"/>
</dbReference>
<dbReference type="PDB" id="1IJK">
    <property type="method" value="X-ray"/>
    <property type="resolution" value="2.60 A"/>
    <property type="chains" value="B=1-133"/>
</dbReference>
<dbReference type="PDB" id="1U0N">
    <property type="method" value="X-ray"/>
    <property type="resolution" value="2.95 A"/>
    <property type="chains" value="B=1-133"/>
</dbReference>
<dbReference type="PDB" id="1U0O">
    <property type="method" value="X-ray"/>
    <property type="resolution" value="2.70 A"/>
    <property type="chains" value="A=1-133"/>
</dbReference>
<dbReference type="PDBsum" id="1FVU"/>
<dbReference type="PDBsum" id="1IJK"/>
<dbReference type="PDBsum" id="1U0N"/>
<dbReference type="PDBsum" id="1U0O"/>
<dbReference type="SMR" id="P22029"/>
<dbReference type="EvolutionaryTrace" id="P22029"/>
<dbReference type="GO" id="GO:0005576">
    <property type="term" value="C:extracellular region"/>
    <property type="evidence" value="ECO:0007669"/>
    <property type="project" value="UniProtKB-SubCell"/>
</dbReference>
<dbReference type="GO" id="GO:0090729">
    <property type="term" value="F:toxin activity"/>
    <property type="evidence" value="ECO:0007669"/>
    <property type="project" value="UniProtKB-KW"/>
</dbReference>
<dbReference type="FunFam" id="3.10.100.10:FF:000087">
    <property type="entry name" value="Snaclec rhodocetin subunit delta"/>
    <property type="match status" value="1"/>
</dbReference>
<dbReference type="Gene3D" id="3.10.100.10">
    <property type="entry name" value="Mannose-Binding Protein A, subunit A"/>
    <property type="match status" value="1"/>
</dbReference>
<dbReference type="InterPro" id="IPR001304">
    <property type="entry name" value="C-type_lectin-like"/>
</dbReference>
<dbReference type="InterPro" id="IPR016186">
    <property type="entry name" value="C-type_lectin-like/link_sf"/>
</dbReference>
<dbReference type="InterPro" id="IPR050111">
    <property type="entry name" value="C-type_lectin/snaclec_domain"/>
</dbReference>
<dbReference type="InterPro" id="IPR018378">
    <property type="entry name" value="C-type_lectin_CS"/>
</dbReference>
<dbReference type="InterPro" id="IPR016187">
    <property type="entry name" value="CTDL_fold"/>
</dbReference>
<dbReference type="PANTHER" id="PTHR22803">
    <property type="entry name" value="MANNOSE, PHOSPHOLIPASE, LECTIN RECEPTOR RELATED"/>
    <property type="match status" value="1"/>
</dbReference>
<dbReference type="Pfam" id="PF00059">
    <property type="entry name" value="Lectin_C"/>
    <property type="match status" value="1"/>
</dbReference>
<dbReference type="SMART" id="SM00034">
    <property type="entry name" value="CLECT"/>
    <property type="match status" value="1"/>
</dbReference>
<dbReference type="SUPFAM" id="SSF56436">
    <property type="entry name" value="C-type lectin-like"/>
    <property type="match status" value="1"/>
</dbReference>
<dbReference type="PROSITE" id="PS00615">
    <property type="entry name" value="C_TYPE_LECTIN_1"/>
    <property type="match status" value="1"/>
</dbReference>
<dbReference type="PROSITE" id="PS50041">
    <property type="entry name" value="C_TYPE_LECTIN_2"/>
    <property type="match status" value="1"/>
</dbReference>
<reference key="1">
    <citation type="journal article" date="1993" name="Proc. Natl. Acad. Sci. U.S.A.">
        <title>Primary structure of two-chain botrocetin, a von Willebrand factor modulator purified from the venom of Bothrops jararaca.</title>
        <authorList>
            <person name="Usami Y."/>
            <person name="Fujimura Y."/>
            <person name="Suzuki M."/>
            <person name="Ozeki Y."/>
            <person name="Nishio K."/>
            <person name="Fukui H."/>
            <person name="Titani K."/>
        </authorList>
    </citation>
    <scope>PROTEIN SEQUENCE</scope>
    <scope>DISULFIDE BONDS</scope>
    <source>
        <tissue>Venom</tissue>
    </source>
</reference>
<reference key="2">
    <citation type="journal article" date="1991" name="Biochemistry">
        <title>Isolation and chemical characterization of two structurally and functionally distinct forms of botrocetin, the platelet coagglutinin isolated from the venom of Bothrops jararaca.</title>
        <authorList>
            <person name="Fujimura Y."/>
            <person name="Titani K."/>
            <person name="Usami Y."/>
            <person name="Suzuki M."/>
            <person name="Oyama R."/>
            <person name="Matsui T."/>
            <person name="Fukui H."/>
            <person name="Sugimoto M."/>
            <person name="Ruggeri Z.M."/>
        </authorList>
    </citation>
    <scope>PROTEIN SEQUENCE OF 1-40</scope>
    <source>
        <tissue>Venom</tissue>
    </source>
</reference>
<reference key="3">
    <citation type="journal article" date="2001" name="Biochemistry">
        <title>Crystal structure of the von Willebrand factor modulator botrocetin.</title>
        <authorList>
            <person name="Sen U."/>
            <person name="Vasudevan S."/>
            <person name="Subbarao G."/>
            <person name="McClintock R.A."/>
            <person name="Celikel R."/>
            <person name="Ruggeri Z.M."/>
            <person name="Varughese K.I."/>
        </authorList>
    </citation>
    <scope>X-RAY CRYSTALLOGRAPHY (1.8 ANGSTROMS)</scope>
    <scope>DISULFIDE BOND</scope>
</reference>
<reference key="4">
    <citation type="journal article" date="2002" name="Structure">
        <title>Structural basis of von Willebrand factor activation by the snake toxin botrocetin.</title>
        <authorList>
            <person name="Fukuda K."/>
            <person name="Doggett T.A."/>
            <person name="Bankston L.A."/>
            <person name="Cruz M.A."/>
            <person name="Diacovo T.G."/>
            <person name="Liddington R.C."/>
        </authorList>
    </citation>
    <scope>X-RAY CRYSTALLOGRAPHY (2.6 ANGSTROMS)</scope>
    <scope>DISULFIDE BOND</scope>
</reference>
<reference key="5">
    <citation type="journal article" date="2005" name="Nat. Struct. Mol. Biol.">
        <title>The snake venom protein botrocetin acts as a biological brace to promote dysfunctional platelet aggregation.</title>
        <authorList>
            <person name="Fukuda K."/>
            <person name="Doggett T."/>
            <person name="Laurenzi I.J."/>
            <person name="Liddington R.C."/>
            <person name="Diacovo T.G."/>
        </authorList>
    </citation>
    <scope>X-RAY CRYSTALLOGRAPHY (2.7 ANGSTROMS)</scope>
    <scope>DISULFIDE BOND</scope>
</reference>
<sequence>DCPSGWSSYEGNCYKFFQQKMNWADAERFCSEQAKGGHLVSIKIYSKEKDFVGDLVTKNIQSSDLYAWIGLRVENKEKQCSSEWSDGSSVSYENVVERTVKKCFALEKDLGFVLWINLYCAQKNPFVCKSPPP</sequence>
<evidence type="ECO:0000255" key="1">
    <source>
        <dbReference type="PROSITE-ProRule" id="PRU00040"/>
    </source>
</evidence>
<evidence type="ECO:0000269" key="2">
    <source>
    </source>
</evidence>
<evidence type="ECO:0000269" key="3">
    <source>
    </source>
</evidence>
<evidence type="ECO:0000269" key="4">
    <source>
    </source>
</evidence>
<evidence type="ECO:0000269" key="5">
    <source>
    </source>
</evidence>
<evidence type="ECO:0000305" key="6"/>
<evidence type="ECO:0000305" key="7">
    <source>
    </source>
</evidence>
<evidence type="ECO:0007829" key="8">
    <source>
        <dbReference type="PDB" id="1FVU"/>
    </source>
</evidence>
<evidence type="ECO:0007829" key="9">
    <source>
        <dbReference type="PDB" id="1IJK"/>
    </source>
</evidence>
<evidence type="ECO:0007829" key="10">
    <source>
        <dbReference type="PDB" id="1U0N"/>
    </source>
</evidence>
<protein>
    <recommendedName>
        <fullName>Snaclec botrocetin subunit alpha</fullName>
    </recommendedName>
    <alternativeName>
        <fullName>Platelet coagglutinin</fullName>
    </alternativeName>
</protein>
<keyword id="KW-0002">3D-structure</keyword>
<keyword id="KW-0903">Direct protein sequencing</keyword>
<keyword id="KW-1015">Disulfide bond</keyword>
<keyword id="KW-1199">Hemostasis impairing toxin</keyword>
<keyword id="KW-1202">Platelet aggregation activating toxin</keyword>
<keyword id="KW-0964">Secreted</keyword>
<keyword id="KW-0800">Toxin</keyword>
<comment type="function">
    <text>Snaclec that binds to von Willebrand factor (VWF) and induces its interaction with GPIbalpha (GP1BA) (via the vWF A1 domain), resulting in platelet aggregation.</text>
</comment>
<comment type="subunit">
    <text evidence="2 3 4 5">Heterodimer of subunits alpha and beta; disulfide-linked. Botrocetin and vWF form a soluble complex.</text>
</comment>
<comment type="subcellular location">
    <subcellularLocation>
        <location>Secreted</location>
    </subcellularLocation>
</comment>
<comment type="tissue specificity">
    <text>Expressed by the venom gland.</text>
</comment>
<comment type="biotechnology">
    <text>Is a standard reagent for testing vWF/platelet interactions and detection of the defects in von Willebrand disease and in GPIb-related disorders such as Bernard-Soulier syndrome.</text>
</comment>
<comment type="miscellaneous">
    <text evidence="7">There are two distinct forms of the vWF-dependent platelet coagglutinin. The dimeric form (snaclec) is 34-fold more active than the metalloprotease botrocetin in promoting vWF binding to platelets (PubMed:1993206).</text>
</comment>
<comment type="similarity">
    <text evidence="6">Belongs to the snaclec family.</text>
</comment>
<accession>P22029</accession>